<dbReference type="EMBL" id="AK144342">
    <property type="protein sequence ID" value="BAE25842.1"/>
    <property type="molecule type" value="mRNA"/>
</dbReference>
<dbReference type="EMBL" id="AK144350">
    <property type="protein sequence ID" value="BAE25844.1"/>
    <property type="molecule type" value="mRNA"/>
</dbReference>
<dbReference type="EMBL" id="AL627411">
    <property type="status" value="NOT_ANNOTATED_CDS"/>
    <property type="molecule type" value="Genomic_DNA"/>
</dbReference>
<dbReference type="EMBL" id="AL954720">
    <property type="status" value="NOT_ANNOTATED_CDS"/>
    <property type="molecule type" value="Genomic_DNA"/>
</dbReference>
<dbReference type="EMBL" id="CH466576">
    <property type="protein sequence ID" value="EDL29148.1"/>
    <property type="molecule type" value="Genomic_DNA"/>
</dbReference>
<dbReference type="EMBL" id="BC150912">
    <property type="protein sequence ID" value="AAI50913.1"/>
    <property type="molecule type" value="mRNA"/>
</dbReference>
<dbReference type="EMBL" id="BC172073">
    <property type="protein sequence ID" value="AAI72073.1"/>
    <property type="molecule type" value="mRNA"/>
</dbReference>
<dbReference type="CCDS" id="CCDS30261.1"/>
<dbReference type="RefSeq" id="NP_001028664.2">
    <property type="nucleotide sequence ID" value="NM_001033492.2"/>
</dbReference>
<dbReference type="SMR" id="A2A9R3"/>
<dbReference type="FunCoup" id="A2A9R3">
    <property type="interactions" value="301"/>
</dbReference>
<dbReference type="STRING" id="10090.ENSMUSP00000109602"/>
<dbReference type="iPTMnet" id="A2A9R3"/>
<dbReference type="PhosphoSitePlus" id="A2A9R3"/>
<dbReference type="SwissPalm" id="A2A9R3"/>
<dbReference type="PaxDb" id="10090-ENSMUSP00000109602"/>
<dbReference type="ProteomicsDB" id="287296"/>
<dbReference type="Pumba" id="A2A9R3"/>
<dbReference type="Antibodypedia" id="24654">
    <property type="antibodies" value="190 antibodies from 27 providers"/>
</dbReference>
<dbReference type="Ensembl" id="ENSMUST00000096378.3">
    <property type="protein sequence ID" value="ENSMUSP00000094107.3"/>
    <property type="gene ID" value="ENSMUSG00000035427.19"/>
</dbReference>
<dbReference type="Ensembl" id="ENSMUST00000113969.10">
    <property type="protein sequence ID" value="ENSMUSP00000109602.4"/>
    <property type="gene ID" value="ENSMUSG00000035427.19"/>
</dbReference>
<dbReference type="GeneID" id="434903"/>
<dbReference type="KEGG" id="mmu:434903"/>
<dbReference type="UCSC" id="uc009tse.1">
    <property type="organism name" value="mouse"/>
</dbReference>
<dbReference type="AGR" id="MGI:2148568"/>
<dbReference type="CTD" id="4115"/>
<dbReference type="MGI" id="MGI:2148568">
    <property type="gene designation" value="Mageb4"/>
</dbReference>
<dbReference type="VEuPathDB" id="HostDB:ENSMUSG00000035427"/>
<dbReference type="eggNOG" id="KOG4562">
    <property type="taxonomic scope" value="Eukaryota"/>
</dbReference>
<dbReference type="GeneTree" id="ENSGT00940000155485"/>
<dbReference type="HOGENOM" id="CLU_489970_0_0_1"/>
<dbReference type="InParanoid" id="A2A9R3"/>
<dbReference type="OMA" id="NGNCARE"/>
<dbReference type="OrthoDB" id="205198at2759"/>
<dbReference type="PhylomeDB" id="A2A9R3"/>
<dbReference type="TreeFam" id="TF328505"/>
<dbReference type="BioGRID-ORCS" id="434903">
    <property type="hits" value="3 hits in 78 CRISPR screens"/>
</dbReference>
<dbReference type="ChiTaRS" id="Mageb4">
    <property type="organism name" value="mouse"/>
</dbReference>
<dbReference type="PRO" id="PR:A2A9R3"/>
<dbReference type="Proteomes" id="UP000000589">
    <property type="component" value="Chromosome X"/>
</dbReference>
<dbReference type="RNAct" id="A2A9R3">
    <property type="molecule type" value="protein"/>
</dbReference>
<dbReference type="Bgee" id="ENSMUSG00000035427">
    <property type="expression patterns" value="Expressed in mesodermal cell in embryo and 6 other cell types or tissues"/>
</dbReference>
<dbReference type="GO" id="GO:0005737">
    <property type="term" value="C:cytoplasm"/>
    <property type="evidence" value="ECO:0000314"/>
    <property type="project" value="MGI"/>
</dbReference>
<dbReference type="FunFam" id="1.10.10.1200:FF:000007">
    <property type="entry name" value="Melanoma-associated antigen C2"/>
    <property type="match status" value="1"/>
</dbReference>
<dbReference type="FunFam" id="1.10.10.1210:FF:000001">
    <property type="entry name" value="melanoma-associated antigen D1"/>
    <property type="match status" value="1"/>
</dbReference>
<dbReference type="Gene3D" id="1.10.10.1200">
    <property type="entry name" value="MAGE homology domain, winged helix WH1 motif"/>
    <property type="match status" value="1"/>
</dbReference>
<dbReference type="Gene3D" id="1.10.10.1210">
    <property type="entry name" value="MAGE homology domain, winged helix WH2 motif"/>
    <property type="match status" value="1"/>
</dbReference>
<dbReference type="InterPro" id="IPR037445">
    <property type="entry name" value="MAGE"/>
</dbReference>
<dbReference type="InterPro" id="IPR021072">
    <property type="entry name" value="MAGE_N"/>
</dbReference>
<dbReference type="InterPro" id="IPR041898">
    <property type="entry name" value="MAGE_WH1"/>
</dbReference>
<dbReference type="InterPro" id="IPR041899">
    <property type="entry name" value="MAGE_WH2"/>
</dbReference>
<dbReference type="InterPro" id="IPR002190">
    <property type="entry name" value="MHD_dom"/>
</dbReference>
<dbReference type="PANTHER" id="PTHR11736:SF164">
    <property type="entry name" value="MELANOMA-ASSOCIATED ANTIGEN B1"/>
    <property type="match status" value="1"/>
</dbReference>
<dbReference type="PANTHER" id="PTHR11736">
    <property type="entry name" value="MELANOMA-ASSOCIATED ANTIGEN MAGE ANTIGEN"/>
    <property type="match status" value="1"/>
</dbReference>
<dbReference type="Pfam" id="PF01454">
    <property type="entry name" value="MAGE"/>
    <property type="match status" value="1"/>
</dbReference>
<dbReference type="Pfam" id="PF12440">
    <property type="entry name" value="MAGE_N"/>
    <property type="match status" value="1"/>
</dbReference>
<dbReference type="SMART" id="SM01373">
    <property type="entry name" value="MAGE"/>
    <property type="match status" value="1"/>
</dbReference>
<dbReference type="SMART" id="SM01392">
    <property type="entry name" value="MAGE_N"/>
    <property type="match status" value="1"/>
</dbReference>
<dbReference type="PROSITE" id="PS50838">
    <property type="entry name" value="MAGE"/>
    <property type="match status" value="1"/>
</dbReference>
<evidence type="ECO:0000255" key="1">
    <source>
        <dbReference type="PROSITE-ProRule" id="PRU00127"/>
    </source>
</evidence>
<evidence type="ECO:0000256" key="2">
    <source>
        <dbReference type="SAM" id="MobiDB-lite"/>
    </source>
</evidence>
<evidence type="ECO:0000269" key="3">
    <source>
    </source>
</evidence>
<evidence type="ECO:0000303" key="4">
    <source>
    </source>
</evidence>
<evidence type="ECO:0000305" key="5"/>
<evidence type="ECO:0000312" key="6">
    <source>
        <dbReference type="EMBL" id="AAI50913.1"/>
    </source>
</evidence>
<evidence type="ECO:0000312" key="7">
    <source>
        <dbReference type="EMBL" id="EDL29148.1"/>
    </source>
</evidence>
<evidence type="ECO:0000312" key="8">
    <source>
        <dbReference type="MGI" id="MGI:2148568"/>
    </source>
</evidence>
<evidence type="ECO:0000312" key="9">
    <source>
        <dbReference type="Proteomes" id="UP000000589"/>
    </source>
</evidence>
<evidence type="ECO:0007744" key="10">
    <source>
    </source>
</evidence>
<name>MAGB4_MOUSE</name>
<sequence>MPRGQKSKARAREKRRLVQDEAQELQDAQAKAGEKGKSPSCSNQDSGDAVASTSTAGFPQKSKSQGEAPTTTARKGGACRRSRKSTRGPREESTSCTRVPRFSENPQNDLLTRKTGMLMQYLLCKYKMKQPASKGEMLKVINRRFKEQLPEILKKASERIQLVFGLEVKEIKPNGGYYTLVSKLDPSVGNALTTSLPFPQNGLLMPLLGVIFLNGNRASEAEIWEFLNVLGIYDGKVHIIFGEPRKLITRDLVKEKYLVYQKEANSDPPSFEFLWGPRAYAETTKMKILEFLAEVNETVPQAFPTHYEEALRDQEERAQAEAVGSPGTSAKDKAEAKVTLVDSSCKYQAESKVTLVDSSCKDQAESKVTLVDPSCKDNAKSKVTLGSSRKYKAKSKVPLVDSSCKDQAESKVTLVDSCKDQAESKVTLVDSSCKDQAESKVTLVDSSCKDQAESKVTLVDPSCKDKAKSKVTLGSSHKYKAKSKVTLVDSSCKDQAESKVTLVDSSCKDQAESKVTLVDPSCKDNAKSKVTLGSSRKYKAKSKVPLVDSSGKDKAV</sequence>
<organism evidence="9">
    <name type="scientific">Mus musculus</name>
    <name type="common">Mouse</name>
    <dbReference type="NCBI Taxonomy" id="10090"/>
    <lineage>
        <taxon>Eukaryota</taxon>
        <taxon>Metazoa</taxon>
        <taxon>Chordata</taxon>
        <taxon>Craniata</taxon>
        <taxon>Vertebrata</taxon>
        <taxon>Euteleostomi</taxon>
        <taxon>Mammalia</taxon>
        <taxon>Eutheria</taxon>
        <taxon>Euarchontoglires</taxon>
        <taxon>Glires</taxon>
        <taxon>Rodentia</taxon>
        <taxon>Myomorpha</taxon>
        <taxon>Muroidea</taxon>
        <taxon>Muridae</taxon>
        <taxon>Murinae</taxon>
        <taxon>Mus</taxon>
        <taxon>Mus</taxon>
    </lineage>
</organism>
<comment type="subcellular location">
    <subcellularLocation>
        <location evidence="3">Cytoplasm</location>
    </subcellularLocation>
</comment>
<comment type="tissue specificity">
    <text evidence="3">Expressed in testis (at protein level).</text>
</comment>
<comment type="developmental stage">
    <text evidence="3">Detected between 13.5 and 14.5 dpc in both female and male gonads (at protein level). Increases in the male gonads and intensely expressed before birth (at protein level). In female gonads, remains constant until birth (at protein level). In testis, specifically expressed in premeiotic germ cells (at protein level). In fetal ovary, expressed in both premeiotic germ cells, and germ cells that have gone through the pachytene phase and entered meiotic arrest (at protein level).</text>
</comment>
<gene>
    <name evidence="8" type="primary">Mageb4</name>
</gene>
<proteinExistence type="evidence at protein level"/>
<keyword id="KW-0963">Cytoplasm</keyword>
<keyword id="KW-0597">Phosphoprotein</keyword>
<keyword id="KW-1185">Reference proteome</keyword>
<keyword id="KW-0677">Repeat</keyword>
<keyword id="KW-0825">Tumor antigen</keyword>
<feature type="chain" id="PRO_0000437174" description="Melanoma-associated antigen B4">
    <location>
        <begin position="1"/>
        <end position="556"/>
    </location>
</feature>
<feature type="domain" description="MAGE" evidence="1">
    <location>
        <begin position="111"/>
        <end position="310"/>
    </location>
</feature>
<feature type="repeat" description="1" evidence="4">
    <location>
        <begin position="334"/>
        <end position="348"/>
    </location>
</feature>
<feature type="repeat" description="2" evidence="4">
    <location>
        <begin position="349"/>
        <end position="363"/>
    </location>
</feature>
<feature type="repeat" description="3" evidence="4">
    <location>
        <begin position="364"/>
        <end position="378"/>
    </location>
</feature>
<feature type="repeat" description="4" evidence="4">
    <location>
        <begin position="379"/>
        <end position="392"/>
    </location>
</feature>
<feature type="repeat" description="5" evidence="4">
    <location>
        <begin position="393"/>
        <end position="407"/>
    </location>
</feature>
<feature type="repeat" description="6" evidence="4">
    <location>
        <begin position="408"/>
        <end position="421"/>
    </location>
</feature>
<feature type="repeat" description="7" evidence="4">
    <location>
        <begin position="422"/>
        <end position="436"/>
    </location>
</feature>
<feature type="repeat" description="8" evidence="4">
    <location>
        <begin position="437"/>
        <end position="451"/>
    </location>
</feature>
<feature type="repeat" description="9" evidence="4">
    <location>
        <begin position="452"/>
        <end position="466"/>
    </location>
</feature>
<feature type="repeat" description="10" evidence="4">
    <location>
        <begin position="467"/>
        <end position="480"/>
    </location>
</feature>
<feature type="repeat" description="11" evidence="4">
    <location>
        <begin position="481"/>
        <end position="495"/>
    </location>
</feature>
<feature type="repeat" description="12" evidence="4">
    <location>
        <begin position="496"/>
        <end position="510"/>
    </location>
</feature>
<feature type="repeat" description="13" evidence="4">
    <location>
        <begin position="511"/>
        <end position="525"/>
    </location>
</feature>
<feature type="repeat" description="14" evidence="4">
    <location>
        <begin position="526"/>
        <end position="539"/>
    </location>
</feature>
<feature type="repeat" description="15" evidence="4">
    <location>
        <begin position="540"/>
        <end position="554"/>
    </location>
</feature>
<feature type="region of interest" description="Disordered" evidence="2">
    <location>
        <begin position="1"/>
        <end position="110"/>
    </location>
</feature>
<feature type="region of interest" description="Disordered" evidence="2">
    <location>
        <begin position="315"/>
        <end position="335"/>
    </location>
</feature>
<feature type="region of interest" description="15 X 15 AA approximate tandem repeats" evidence="4">
    <location>
        <begin position="334"/>
        <end position="554"/>
    </location>
</feature>
<feature type="compositionally biased region" description="Basic residues" evidence="2">
    <location>
        <begin position="1"/>
        <end position="15"/>
    </location>
</feature>
<feature type="compositionally biased region" description="Polar residues" evidence="2">
    <location>
        <begin position="39"/>
        <end position="73"/>
    </location>
</feature>
<feature type="compositionally biased region" description="Basic residues" evidence="2">
    <location>
        <begin position="77"/>
        <end position="87"/>
    </location>
</feature>
<feature type="modified residue" description="Phosphoserine" evidence="10">
    <location>
        <position position="325"/>
    </location>
</feature>
<feature type="sequence conflict" description="In Ref. 4; AAI72073." evidence="5" ref="4">
    <original>A</original>
    <variation>T</variation>
    <location>
        <position position="78"/>
    </location>
</feature>
<feature type="sequence conflict" description="In Ref. 1; BAE25842/BAE25844." evidence="5" ref="1">
    <original>N</original>
    <variation>K</variation>
    <location>
        <position position="378"/>
    </location>
</feature>
<feature type="sequence conflict" description="In Ref. 1; BAE25842/BAE25844." evidence="5" ref="1">
    <original>V</original>
    <variation>L</variation>
    <location>
        <position position="444"/>
    </location>
</feature>
<feature type="sequence conflict" description="In Ref. 1; BAE25842/BAE25844." evidence="5" ref="1">
    <original>KVTLG</original>
    <variation>NGHTLA</variation>
    <location>
        <begin position="529"/>
        <end position="533"/>
    </location>
</feature>
<reference key="1">
    <citation type="journal article" date="2005" name="Science">
        <title>The transcriptional landscape of the mammalian genome.</title>
        <authorList>
            <person name="Carninci P."/>
            <person name="Kasukawa T."/>
            <person name="Katayama S."/>
            <person name="Gough J."/>
            <person name="Frith M.C."/>
            <person name="Maeda N."/>
            <person name="Oyama R."/>
            <person name="Ravasi T."/>
            <person name="Lenhard B."/>
            <person name="Wells C."/>
            <person name="Kodzius R."/>
            <person name="Shimokawa K."/>
            <person name="Bajic V.B."/>
            <person name="Brenner S.E."/>
            <person name="Batalov S."/>
            <person name="Forrest A.R."/>
            <person name="Zavolan M."/>
            <person name="Davis M.J."/>
            <person name="Wilming L.G."/>
            <person name="Aidinis V."/>
            <person name="Allen J.E."/>
            <person name="Ambesi-Impiombato A."/>
            <person name="Apweiler R."/>
            <person name="Aturaliya R.N."/>
            <person name="Bailey T.L."/>
            <person name="Bansal M."/>
            <person name="Baxter L."/>
            <person name="Beisel K.W."/>
            <person name="Bersano T."/>
            <person name="Bono H."/>
            <person name="Chalk A.M."/>
            <person name="Chiu K.P."/>
            <person name="Choudhary V."/>
            <person name="Christoffels A."/>
            <person name="Clutterbuck D.R."/>
            <person name="Crowe M.L."/>
            <person name="Dalla E."/>
            <person name="Dalrymple B.P."/>
            <person name="de Bono B."/>
            <person name="Della Gatta G."/>
            <person name="di Bernardo D."/>
            <person name="Down T."/>
            <person name="Engstrom P."/>
            <person name="Fagiolini M."/>
            <person name="Faulkner G."/>
            <person name="Fletcher C.F."/>
            <person name="Fukushima T."/>
            <person name="Furuno M."/>
            <person name="Futaki S."/>
            <person name="Gariboldi M."/>
            <person name="Georgii-Hemming P."/>
            <person name="Gingeras T.R."/>
            <person name="Gojobori T."/>
            <person name="Green R.E."/>
            <person name="Gustincich S."/>
            <person name="Harbers M."/>
            <person name="Hayashi Y."/>
            <person name="Hensch T.K."/>
            <person name="Hirokawa N."/>
            <person name="Hill D."/>
            <person name="Huminiecki L."/>
            <person name="Iacono M."/>
            <person name="Ikeo K."/>
            <person name="Iwama A."/>
            <person name="Ishikawa T."/>
            <person name="Jakt M."/>
            <person name="Kanapin A."/>
            <person name="Katoh M."/>
            <person name="Kawasawa Y."/>
            <person name="Kelso J."/>
            <person name="Kitamura H."/>
            <person name="Kitano H."/>
            <person name="Kollias G."/>
            <person name="Krishnan S.P."/>
            <person name="Kruger A."/>
            <person name="Kummerfeld S.K."/>
            <person name="Kurochkin I.V."/>
            <person name="Lareau L.F."/>
            <person name="Lazarevic D."/>
            <person name="Lipovich L."/>
            <person name="Liu J."/>
            <person name="Liuni S."/>
            <person name="McWilliam S."/>
            <person name="Madan Babu M."/>
            <person name="Madera M."/>
            <person name="Marchionni L."/>
            <person name="Matsuda H."/>
            <person name="Matsuzawa S."/>
            <person name="Miki H."/>
            <person name="Mignone F."/>
            <person name="Miyake S."/>
            <person name="Morris K."/>
            <person name="Mottagui-Tabar S."/>
            <person name="Mulder N."/>
            <person name="Nakano N."/>
            <person name="Nakauchi H."/>
            <person name="Ng P."/>
            <person name="Nilsson R."/>
            <person name="Nishiguchi S."/>
            <person name="Nishikawa S."/>
            <person name="Nori F."/>
            <person name="Ohara O."/>
            <person name="Okazaki Y."/>
            <person name="Orlando V."/>
            <person name="Pang K.C."/>
            <person name="Pavan W.J."/>
            <person name="Pavesi G."/>
            <person name="Pesole G."/>
            <person name="Petrovsky N."/>
            <person name="Piazza S."/>
            <person name="Reed J."/>
            <person name="Reid J.F."/>
            <person name="Ring B.Z."/>
            <person name="Ringwald M."/>
            <person name="Rost B."/>
            <person name="Ruan Y."/>
            <person name="Salzberg S.L."/>
            <person name="Sandelin A."/>
            <person name="Schneider C."/>
            <person name="Schoenbach C."/>
            <person name="Sekiguchi K."/>
            <person name="Semple C.A."/>
            <person name="Seno S."/>
            <person name="Sessa L."/>
            <person name="Sheng Y."/>
            <person name="Shibata Y."/>
            <person name="Shimada H."/>
            <person name="Shimada K."/>
            <person name="Silva D."/>
            <person name="Sinclair B."/>
            <person name="Sperling S."/>
            <person name="Stupka E."/>
            <person name="Sugiura K."/>
            <person name="Sultana R."/>
            <person name="Takenaka Y."/>
            <person name="Taki K."/>
            <person name="Tammoja K."/>
            <person name="Tan S.L."/>
            <person name="Tang S."/>
            <person name="Taylor M.S."/>
            <person name="Tegner J."/>
            <person name="Teichmann S.A."/>
            <person name="Ueda H.R."/>
            <person name="van Nimwegen E."/>
            <person name="Verardo R."/>
            <person name="Wei C.L."/>
            <person name="Yagi K."/>
            <person name="Yamanishi H."/>
            <person name="Zabarovsky E."/>
            <person name="Zhu S."/>
            <person name="Zimmer A."/>
            <person name="Hide W."/>
            <person name="Bult C."/>
            <person name="Grimmond S.M."/>
            <person name="Teasdale R.D."/>
            <person name="Liu E.T."/>
            <person name="Brusic V."/>
            <person name="Quackenbush J."/>
            <person name="Wahlestedt C."/>
            <person name="Mattick J.S."/>
            <person name="Hume D.A."/>
            <person name="Kai C."/>
            <person name="Sasaki D."/>
            <person name="Tomaru Y."/>
            <person name="Fukuda S."/>
            <person name="Kanamori-Katayama M."/>
            <person name="Suzuki M."/>
            <person name="Aoki J."/>
            <person name="Arakawa T."/>
            <person name="Iida J."/>
            <person name="Imamura K."/>
            <person name="Itoh M."/>
            <person name="Kato T."/>
            <person name="Kawaji H."/>
            <person name="Kawagashira N."/>
            <person name="Kawashima T."/>
            <person name="Kojima M."/>
            <person name="Kondo S."/>
            <person name="Konno H."/>
            <person name="Nakano K."/>
            <person name="Ninomiya N."/>
            <person name="Nishio T."/>
            <person name="Okada M."/>
            <person name="Plessy C."/>
            <person name="Shibata K."/>
            <person name="Shiraki T."/>
            <person name="Suzuki S."/>
            <person name="Tagami M."/>
            <person name="Waki K."/>
            <person name="Watahiki A."/>
            <person name="Okamura-Oho Y."/>
            <person name="Suzuki H."/>
            <person name="Kawai J."/>
            <person name="Hayashizaki Y."/>
        </authorList>
    </citation>
    <scope>NUCLEOTIDE SEQUENCE [LARGE SCALE MRNA]</scope>
    <source>
        <strain>C57BL/6J</strain>
        <tissue>Testis</tissue>
    </source>
</reference>
<reference key="2">
    <citation type="journal article" date="2009" name="PLoS Biol.">
        <title>Lineage-specific biology revealed by a finished genome assembly of the mouse.</title>
        <authorList>
            <person name="Church D.M."/>
            <person name="Goodstadt L."/>
            <person name="Hillier L.W."/>
            <person name="Zody M.C."/>
            <person name="Goldstein S."/>
            <person name="She X."/>
            <person name="Bult C.J."/>
            <person name="Agarwala R."/>
            <person name="Cherry J.L."/>
            <person name="DiCuccio M."/>
            <person name="Hlavina W."/>
            <person name="Kapustin Y."/>
            <person name="Meric P."/>
            <person name="Maglott D."/>
            <person name="Birtle Z."/>
            <person name="Marques A.C."/>
            <person name="Graves T."/>
            <person name="Zhou S."/>
            <person name="Teague B."/>
            <person name="Potamousis K."/>
            <person name="Churas C."/>
            <person name="Place M."/>
            <person name="Herschleb J."/>
            <person name="Runnheim R."/>
            <person name="Forrest D."/>
            <person name="Amos-Landgraf J."/>
            <person name="Schwartz D.C."/>
            <person name="Cheng Z."/>
            <person name="Lindblad-Toh K."/>
            <person name="Eichler E.E."/>
            <person name="Ponting C.P."/>
        </authorList>
    </citation>
    <scope>NUCLEOTIDE SEQUENCE [LARGE SCALE GENOMIC DNA]</scope>
    <source>
        <strain evidence="9">C57BL/6J</strain>
    </source>
</reference>
<reference evidence="7" key="3">
    <citation type="submission" date="2005-09" db="EMBL/GenBank/DDBJ databases">
        <authorList>
            <person name="Mural R.J."/>
            <person name="Adams M.D."/>
            <person name="Myers E.W."/>
            <person name="Smith H.O."/>
            <person name="Venter J.C."/>
        </authorList>
    </citation>
    <scope>NUCLEOTIDE SEQUENCE [LARGE SCALE GENOMIC DNA]</scope>
</reference>
<reference key="4">
    <citation type="journal article" date="2004" name="Genome Res.">
        <title>The status, quality, and expansion of the NIH full-length cDNA project: the Mammalian Gene Collection (MGC).</title>
        <authorList>
            <consortium name="The MGC Project Team"/>
        </authorList>
    </citation>
    <scope>NUCLEOTIDE SEQUENCE [LARGE SCALE MRNA]</scope>
    <source>
        <tissue evidence="6">Testis</tissue>
    </source>
</reference>
<reference evidence="5" key="5">
    <citation type="journal article" date="2000" name="Cancer Res.">
        <title>Mage-b4, a novel melanoma antigen (MAGE) gene specifically expressed during germ cell differentiation.</title>
        <authorList>
            <person name="Osterlund C."/>
            <person name="Toehoenen V."/>
            <person name="Forslund K.O."/>
            <person name="Nordqvist K."/>
        </authorList>
    </citation>
    <scope>SUBCELLULAR LOCATION</scope>
    <scope>TISSUE SPECIFICITY</scope>
    <scope>DEVELOPMENTAL STAGE</scope>
</reference>
<reference key="6">
    <citation type="journal article" date="2010" name="Cell">
        <title>A tissue-specific atlas of mouse protein phosphorylation and expression.</title>
        <authorList>
            <person name="Huttlin E.L."/>
            <person name="Jedrychowski M.P."/>
            <person name="Elias J.E."/>
            <person name="Goswami T."/>
            <person name="Rad R."/>
            <person name="Beausoleil S.A."/>
            <person name="Villen J."/>
            <person name="Haas W."/>
            <person name="Sowa M.E."/>
            <person name="Gygi S.P."/>
        </authorList>
    </citation>
    <scope>PHOSPHORYLATION [LARGE SCALE ANALYSIS] AT SER-325</scope>
    <scope>IDENTIFICATION BY MASS SPECTROMETRY [LARGE SCALE ANALYSIS]</scope>
    <source>
        <tissue>Testis</tissue>
    </source>
</reference>
<accession>A2A9R3</accession>
<accession>B7ZWI9</accession>
<accession>Q3UNA3</accession>
<protein>
    <recommendedName>
        <fullName evidence="8">Melanoma-associated antigen B4</fullName>
    </recommendedName>
</protein>